<comment type="catalytic activity">
    <reaction evidence="1">
        <text>2-(N(omega)-L-arginino)succinate = fumarate + L-arginine</text>
        <dbReference type="Rhea" id="RHEA:24020"/>
        <dbReference type="ChEBI" id="CHEBI:29806"/>
        <dbReference type="ChEBI" id="CHEBI:32682"/>
        <dbReference type="ChEBI" id="CHEBI:57472"/>
        <dbReference type="EC" id="4.3.2.1"/>
    </reaction>
</comment>
<comment type="pathway">
    <text evidence="1">Amino-acid biosynthesis; L-arginine biosynthesis; L-arginine from L-ornithine and carbamoyl phosphate: step 3/3.</text>
</comment>
<comment type="subcellular location">
    <subcellularLocation>
        <location evidence="1">Cytoplasm</location>
    </subcellularLocation>
</comment>
<comment type="similarity">
    <text evidence="1">Belongs to the lyase 1 family. Argininosuccinate lyase subfamily.</text>
</comment>
<name>ARLY_STRMU</name>
<feature type="chain" id="PRO_0000137834" description="Argininosuccinate lyase">
    <location>
        <begin position="1"/>
        <end position="460"/>
    </location>
</feature>
<sequence length="460" mass="51500">MTTKNHKLWGGRFEAGLAQWVEEFGASISFDQKLAEFDLKGSIAHVTMLGEKGIISQEDAATIKAGLEDLLEEYKAGQLKFDVSNEDIHMNMESLLTAKIGPVAGKLHTARSRNDQVATDMHLYLKAKLDEVIEKLANLRTVLVDLADKHVHTIMPGYTHLQHAQPISFGHHLMAYYNMFTRDSERFIFNVKHTDLSPLGAAALAGTTFPIDREMTAQLMGFAEPYSNSLDAVSDRDFILEFLSNASILMMHMSRMCEEVISWCSHEYQFVTLSDTFSTGSSIMPQKKNPDMAELIRGKSGRVYANLFGLLTVMKALPLAYNKDLQEDKEGMFDTAETITVALDILAGMLSSMIVNDKHMAESTQKDFSNATELADYLASKGMPFRQAHEIVGKLILECSKNGHYLQDVPLERYQTISDLIEEDVYETLKSHTAVERRHSLGGTGFEQVKWQIAEAKKAL</sequence>
<reference key="1">
    <citation type="journal article" date="2002" name="Proc. Natl. Acad. Sci. U.S.A.">
        <title>Genome sequence of Streptococcus mutans UA159, a cariogenic dental pathogen.</title>
        <authorList>
            <person name="Ajdic D.J."/>
            <person name="McShan W.M."/>
            <person name="McLaughlin R.E."/>
            <person name="Savic G."/>
            <person name="Chang J."/>
            <person name="Carson M.B."/>
            <person name="Primeaux C."/>
            <person name="Tian R."/>
            <person name="Kenton S."/>
            <person name="Jia H.G."/>
            <person name="Lin S.P."/>
            <person name="Qian Y."/>
            <person name="Li S."/>
            <person name="Zhu H."/>
            <person name="Najar F.Z."/>
            <person name="Lai H."/>
            <person name="White J."/>
            <person name="Roe B.A."/>
            <person name="Ferretti J.J."/>
        </authorList>
    </citation>
    <scope>NUCLEOTIDE SEQUENCE [LARGE SCALE GENOMIC DNA]</scope>
    <source>
        <strain>ATCC 700610 / UA159</strain>
    </source>
</reference>
<evidence type="ECO:0000255" key="1">
    <source>
        <dbReference type="HAMAP-Rule" id="MF_00006"/>
    </source>
</evidence>
<accession>Q8DVX5</accession>
<dbReference type="EC" id="4.3.2.1" evidence="1"/>
<dbReference type="EMBL" id="AE014133">
    <property type="protein sequence ID" value="AAN58094.1"/>
    <property type="molecule type" value="Genomic_DNA"/>
</dbReference>
<dbReference type="RefSeq" id="NP_720788.1">
    <property type="nucleotide sequence ID" value="NC_004350.2"/>
</dbReference>
<dbReference type="RefSeq" id="WP_002262512.1">
    <property type="nucleotide sequence ID" value="NC_004350.2"/>
</dbReference>
<dbReference type="SMR" id="Q8DVX5"/>
<dbReference type="STRING" id="210007.SMU_335"/>
<dbReference type="KEGG" id="smu:SMU_335"/>
<dbReference type="PATRIC" id="fig|210007.7.peg.290"/>
<dbReference type="eggNOG" id="COG0165">
    <property type="taxonomic scope" value="Bacteria"/>
</dbReference>
<dbReference type="HOGENOM" id="CLU_027272_2_3_9"/>
<dbReference type="OrthoDB" id="9769623at2"/>
<dbReference type="PhylomeDB" id="Q8DVX5"/>
<dbReference type="BRENDA" id="4.3.2.1">
    <property type="organism ID" value="5941"/>
</dbReference>
<dbReference type="UniPathway" id="UPA00068">
    <property type="reaction ID" value="UER00114"/>
</dbReference>
<dbReference type="Proteomes" id="UP000002512">
    <property type="component" value="Chromosome"/>
</dbReference>
<dbReference type="GO" id="GO:0005829">
    <property type="term" value="C:cytosol"/>
    <property type="evidence" value="ECO:0007669"/>
    <property type="project" value="TreeGrafter"/>
</dbReference>
<dbReference type="GO" id="GO:0004056">
    <property type="term" value="F:argininosuccinate lyase activity"/>
    <property type="evidence" value="ECO:0007669"/>
    <property type="project" value="UniProtKB-UniRule"/>
</dbReference>
<dbReference type="GO" id="GO:0042450">
    <property type="term" value="P:arginine biosynthetic process via ornithine"/>
    <property type="evidence" value="ECO:0007669"/>
    <property type="project" value="InterPro"/>
</dbReference>
<dbReference type="GO" id="GO:0006526">
    <property type="term" value="P:L-arginine biosynthetic process"/>
    <property type="evidence" value="ECO:0007669"/>
    <property type="project" value="UniProtKB-UniRule"/>
</dbReference>
<dbReference type="CDD" id="cd01359">
    <property type="entry name" value="Argininosuccinate_lyase"/>
    <property type="match status" value="1"/>
</dbReference>
<dbReference type="FunFam" id="1.10.275.10:FF:000002">
    <property type="entry name" value="Argininosuccinate lyase"/>
    <property type="match status" value="1"/>
</dbReference>
<dbReference type="FunFam" id="1.10.40.30:FF:000001">
    <property type="entry name" value="Argininosuccinate lyase"/>
    <property type="match status" value="1"/>
</dbReference>
<dbReference type="FunFam" id="1.20.200.10:FF:000015">
    <property type="entry name" value="argininosuccinate lyase isoform X2"/>
    <property type="match status" value="1"/>
</dbReference>
<dbReference type="Gene3D" id="1.10.40.30">
    <property type="entry name" value="Fumarase/aspartase (C-terminal domain)"/>
    <property type="match status" value="1"/>
</dbReference>
<dbReference type="Gene3D" id="1.20.200.10">
    <property type="entry name" value="Fumarase/aspartase (Central domain)"/>
    <property type="match status" value="1"/>
</dbReference>
<dbReference type="Gene3D" id="1.10.275.10">
    <property type="entry name" value="Fumarase/aspartase (N-terminal domain)"/>
    <property type="match status" value="1"/>
</dbReference>
<dbReference type="HAMAP" id="MF_00006">
    <property type="entry name" value="Arg_succ_lyase"/>
    <property type="match status" value="1"/>
</dbReference>
<dbReference type="InterPro" id="IPR029419">
    <property type="entry name" value="Arg_succ_lyase_C"/>
</dbReference>
<dbReference type="InterPro" id="IPR009049">
    <property type="entry name" value="Argininosuccinate_lyase"/>
</dbReference>
<dbReference type="InterPro" id="IPR024083">
    <property type="entry name" value="Fumarase/histidase_N"/>
</dbReference>
<dbReference type="InterPro" id="IPR020557">
    <property type="entry name" value="Fumarate_lyase_CS"/>
</dbReference>
<dbReference type="InterPro" id="IPR000362">
    <property type="entry name" value="Fumarate_lyase_fam"/>
</dbReference>
<dbReference type="InterPro" id="IPR022761">
    <property type="entry name" value="Fumarate_lyase_N"/>
</dbReference>
<dbReference type="InterPro" id="IPR008948">
    <property type="entry name" value="L-Aspartase-like"/>
</dbReference>
<dbReference type="NCBIfam" id="TIGR00838">
    <property type="entry name" value="argH"/>
    <property type="match status" value="1"/>
</dbReference>
<dbReference type="PANTHER" id="PTHR43814">
    <property type="entry name" value="ARGININOSUCCINATE LYASE"/>
    <property type="match status" value="1"/>
</dbReference>
<dbReference type="PANTHER" id="PTHR43814:SF1">
    <property type="entry name" value="ARGININOSUCCINATE LYASE"/>
    <property type="match status" value="1"/>
</dbReference>
<dbReference type="Pfam" id="PF14698">
    <property type="entry name" value="ASL_C2"/>
    <property type="match status" value="1"/>
</dbReference>
<dbReference type="Pfam" id="PF00206">
    <property type="entry name" value="Lyase_1"/>
    <property type="match status" value="1"/>
</dbReference>
<dbReference type="PRINTS" id="PR00145">
    <property type="entry name" value="ARGSUCLYASE"/>
</dbReference>
<dbReference type="PRINTS" id="PR00149">
    <property type="entry name" value="FUMRATELYASE"/>
</dbReference>
<dbReference type="SUPFAM" id="SSF48557">
    <property type="entry name" value="L-aspartase-like"/>
    <property type="match status" value="1"/>
</dbReference>
<dbReference type="PROSITE" id="PS00163">
    <property type="entry name" value="FUMARATE_LYASES"/>
    <property type="match status" value="1"/>
</dbReference>
<protein>
    <recommendedName>
        <fullName evidence="1">Argininosuccinate lyase</fullName>
        <shortName evidence="1">ASAL</shortName>
        <ecNumber evidence="1">4.3.2.1</ecNumber>
    </recommendedName>
    <alternativeName>
        <fullName evidence="1">Arginosuccinase</fullName>
    </alternativeName>
</protein>
<proteinExistence type="inferred from homology"/>
<organism>
    <name type="scientific">Streptococcus mutans serotype c (strain ATCC 700610 / UA159)</name>
    <dbReference type="NCBI Taxonomy" id="210007"/>
    <lineage>
        <taxon>Bacteria</taxon>
        <taxon>Bacillati</taxon>
        <taxon>Bacillota</taxon>
        <taxon>Bacilli</taxon>
        <taxon>Lactobacillales</taxon>
        <taxon>Streptococcaceae</taxon>
        <taxon>Streptococcus</taxon>
    </lineage>
</organism>
<gene>
    <name evidence="1" type="primary">argH</name>
    <name type="ordered locus">SMU_335</name>
</gene>
<keyword id="KW-0028">Amino-acid biosynthesis</keyword>
<keyword id="KW-0055">Arginine biosynthesis</keyword>
<keyword id="KW-0963">Cytoplasm</keyword>
<keyword id="KW-0456">Lyase</keyword>
<keyword id="KW-1185">Reference proteome</keyword>